<sequence>MLKSNNASETATRKVGDKTAKKVFFRRRKGCPLSVPNAPVIDYKNPELLIKFVSEGGRMLPSRITNVCAKKQRKLNNAIKIARILALLPFVFQAK</sequence>
<name>RS18_RICFE</name>
<organism>
    <name type="scientific">Rickettsia felis (strain ATCC VR-1525 / URRWXCal2)</name>
    <name type="common">Rickettsia azadi</name>
    <dbReference type="NCBI Taxonomy" id="315456"/>
    <lineage>
        <taxon>Bacteria</taxon>
        <taxon>Pseudomonadati</taxon>
        <taxon>Pseudomonadota</taxon>
        <taxon>Alphaproteobacteria</taxon>
        <taxon>Rickettsiales</taxon>
        <taxon>Rickettsiaceae</taxon>
        <taxon>Rickettsieae</taxon>
        <taxon>Rickettsia</taxon>
        <taxon>spotted fever group</taxon>
    </lineage>
</organism>
<protein>
    <recommendedName>
        <fullName evidence="1">Small ribosomal subunit protein bS18</fullName>
    </recommendedName>
    <alternativeName>
        <fullName evidence="2">30S ribosomal protein S18</fullName>
    </alternativeName>
</protein>
<gene>
    <name evidence="1" type="primary">rpsR</name>
    <name type="ordered locus">RF_0142</name>
</gene>
<evidence type="ECO:0000255" key="1">
    <source>
        <dbReference type="HAMAP-Rule" id="MF_00270"/>
    </source>
</evidence>
<evidence type="ECO:0000305" key="2"/>
<accession>Q4UN65</accession>
<comment type="function">
    <text evidence="1">Binds as a heterodimer with protein bS6 to the central domain of the 16S rRNA, where it helps stabilize the platform of the 30S subunit.</text>
</comment>
<comment type="subunit">
    <text evidence="1">Part of the 30S ribosomal subunit. Forms a tight heterodimer with protein bS6.</text>
</comment>
<comment type="similarity">
    <text evidence="1">Belongs to the bacterial ribosomal protein bS18 family.</text>
</comment>
<reference key="1">
    <citation type="journal article" date="2005" name="PLoS Biol.">
        <title>The genome sequence of Rickettsia felis identifies the first putative conjugative plasmid in an obligate intracellular parasite.</title>
        <authorList>
            <person name="Ogata H."/>
            <person name="Renesto P."/>
            <person name="Audic S."/>
            <person name="Robert C."/>
            <person name="Blanc G."/>
            <person name="Fournier P.-E."/>
            <person name="Parinello H."/>
            <person name="Claverie J.-M."/>
            <person name="Raoult D."/>
        </authorList>
    </citation>
    <scope>NUCLEOTIDE SEQUENCE [LARGE SCALE GENOMIC DNA]</scope>
    <source>
        <strain>ATCC VR-1525 / URRWXCal2</strain>
    </source>
</reference>
<keyword id="KW-0687">Ribonucleoprotein</keyword>
<keyword id="KW-0689">Ribosomal protein</keyword>
<keyword id="KW-0694">RNA-binding</keyword>
<keyword id="KW-0699">rRNA-binding</keyword>
<proteinExistence type="inferred from homology"/>
<feature type="chain" id="PRO_0000278023" description="Small ribosomal subunit protein bS18">
    <location>
        <begin position="1"/>
        <end position="95"/>
    </location>
</feature>
<dbReference type="EMBL" id="CP000053">
    <property type="protein sequence ID" value="AAY60993.1"/>
    <property type="molecule type" value="Genomic_DNA"/>
</dbReference>
<dbReference type="SMR" id="Q4UN65"/>
<dbReference type="STRING" id="315456.RF_0142"/>
<dbReference type="KEGG" id="rfe:RF_0142"/>
<dbReference type="eggNOG" id="COG0238">
    <property type="taxonomic scope" value="Bacteria"/>
</dbReference>
<dbReference type="HOGENOM" id="CLU_148710_2_1_5"/>
<dbReference type="OrthoDB" id="9812008at2"/>
<dbReference type="Proteomes" id="UP000008548">
    <property type="component" value="Chromosome"/>
</dbReference>
<dbReference type="GO" id="GO:0022627">
    <property type="term" value="C:cytosolic small ribosomal subunit"/>
    <property type="evidence" value="ECO:0007669"/>
    <property type="project" value="TreeGrafter"/>
</dbReference>
<dbReference type="GO" id="GO:0070181">
    <property type="term" value="F:small ribosomal subunit rRNA binding"/>
    <property type="evidence" value="ECO:0007669"/>
    <property type="project" value="TreeGrafter"/>
</dbReference>
<dbReference type="GO" id="GO:0003735">
    <property type="term" value="F:structural constituent of ribosome"/>
    <property type="evidence" value="ECO:0007669"/>
    <property type="project" value="InterPro"/>
</dbReference>
<dbReference type="GO" id="GO:0006412">
    <property type="term" value="P:translation"/>
    <property type="evidence" value="ECO:0007669"/>
    <property type="project" value="UniProtKB-UniRule"/>
</dbReference>
<dbReference type="Gene3D" id="4.10.640.10">
    <property type="entry name" value="Ribosomal protein S18"/>
    <property type="match status" value="1"/>
</dbReference>
<dbReference type="HAMAP" id="MF_00270">
    <property type="entry name" value="Ribosomal_bS18"/>
    <property type="match status" value="1"/>
</dbReference>
<dbReference type="InterPro" id="IPR001648">
    <property type="entry name" value="Ribosomal_bS18"/>
</dbReference>
<dbReference type="InterPro" id="IPR018275">
    <property type="entry name" value="Ribosomal_bS18_CS"/>
</dbReference>
<dbReference type="InterPro" id="IPR036870">
    <property type="entry name" value="Ribosomal_bS18_sf"/>
</dbReference>
<dbReference type="NCBIfam" id="TIGR00165">
    <property type="entry name" value="S18"/>
    <property type="match status" value="1"/>
</dbReference>
<dbReference type="PANTHER" id="PTHR13479">
    <property type="entry name" value="30S RIBOSOMAL PROTEIN S18"/>
    <property type="match status" value="1"/>
</dbReference>
<dbReference type="PANTHER" id="PTHR13479:SF40">
    <property type="entry name" value="SMALL RIBOSOMAL SUBUNIT PROTEIN BS18M"/>
    <property type="match status" value="1"/>
</dbReference>
<dbReference type="Pfam" id="PF01084">
    <property type="entry name" value="Ribosomal_S18"/>
    <property type="match status" value="1"/>
</dbReference>
<dbReference type="PRINTS" id="PR00974">
    <property type="entry name" value="RIBOSOMALS18"/>
</dbReference>
<dbReference type="SUPFAM" id="SSF46911">
    <property type="entry name" value="Ribosomal protein S18"/>
    <property type="match status" value="1"/>
</dbReference>
<dbReference type="PROSITE" id="PS00057">
    <property type="entry name" value="RIBOSOMAL_S18"/>
    <property type="match status" value="1"/>
</dbReference>